<sequence length="298" mass="32279">MNNLQTQFPHIAIKLNEPLSKYTYTKTGGEADVFVMPKTIEEAQEVVAYCHQNKIPLTILGNGSNLIIKDGGIRGVILHLDLLQTIERNNTQIIAMSGAKLIDTAKFALDESLSGLEFACGIPGSIGGALHMNAGAYGGEISDVLEAATVLTQTGELKKLKRSELKAAYRFSTIAEKNYIVLDATFSLALEEKNLIQAKMDELTAAREAKQPLEYPSCGSVFKRPPGHFAGKLIQDSGLQGHIIGGAQVSLKHAGFIVNIGGATATDYMNLIAYVQKTVREKFDVELETEVKIIGEDK</sequence>
<feature type="chain" id="PRO_1000191428" description="UDP-N-acetylenolpyruvoylglucosamine reductase">
    <location>
        <begin position="1"/>
        <end position="298"/>
    </location>
</feature>
<feature type="domain" description="FAD-binding PCMH-type" evidence="1">
    <location>
        <begin position="27"/>
        <end position="191"/>
    </location>
</feature>
<feature type="active site" evidence="1">
    <location>
        <position position="170"/>
    </location>
</feature>
<feature type="active site" description="Proton donor" evidence="1">
    <location>
        <position position="220"/>
    </location>
</feature>
<feature type="active site" evidence="1">
    <location>
        <position position="290"/>
    </location>
</feature>
<accession>B8DE89</accession>
<name>MURB_LISMH</name>
<organism>
    <name type="scientific">Listeria monocytogenes serotype 4a (strain HCC23)</name>
    <dbReference type="NCBI Taxonomy" id="552536"/>
    <lineage>
        <taxon>Bacteria</taxon>
        <taxon>Bacillati</taxon>
        <taxon>Bacillota</taxon>
        <taxon>Bacilli</taxon>
        <taxon>Bacillales</taxon>
        <taxon>Listeriaceae</taxon>
        <taxon>Listeria</taxon>
    </lineage>
</organism>
<reference key="1">
    <citation type="journal article" date="2011" name="J. Bacteriol.">
        <title>Genome sequence of lineage III Listeria monocytogenes strain HCC23.</title>
        <authorList>
            <person name="Steele C.L."/>
            <person name="Donaldson J.R."/>
            <person name="Paul D."/>
            <person name="Banes M.M."/>
            <person name="Arick T."/>
            <person name="Bridges S.M."/>
            <person name="Lawrence M.L."/>
        </authorList>
    </citation>
    <scope>NUCLEOTIDE SEQUENCE [LARGE SCALE GENOMIC DNA]</scope>
    <source>
        <strain>HCC23</strain>
    </source>
</reference>
<comment type="function">
    <text evidence="1">Cell wall formation.</text>
</comment>
<comment type="catalytic activity">
    <reaction evidence="1">
        <text>UDP-N-acetyl-alpha-D-muramate + NADP(+) = UDP-N-acetyl-3-O-(1-carboxyvinyl)-alpha-D-glucosamine + NADPH + H(+)</text>
        <dbReference type="Rhea" id="RHEA:12248"/>
        <dbReference type="ChEBI" id="CHEBI:15378"/>
        <dbReference type="ChEBI" id="CHEBI:57783"/>
        <dbReference type="ChEBI" id="CHEBI:58349"/>
        <dbReference type="ChEBI" id="CHEBI:68483"/>
        <dbReference type="ChEBI" id="CHEBI:70757"/>
        <dbReference type="EC" id="1.3.1.98"/>
    </reaction>
</comment>
<comment type="cofactor">
    <cofactor evidence="1">
        <name>FAD</name>
        <dbReference type="ChEBI" id="CHEBI:57692"/>
    </cofactor>
</comment>
<comment type="pathway">
    <text evidence="1">Cell wall biogenesis; peptidoglycan biosynthesis.</text>
</comment>
<comment type="subcellular location">
    <subcellularLocation>
        <location evidence="1">Cytoplasm</location>
    </subcellularLocation>
</comment>
<comment type="similarity">
    <text evidence="1">Belongs to the MurB family.</text>
</comment>
<evidence type="ECO:0000255" key="1">
    <source>
        <dbReference type="HAMAP-Rule" id="MF_00037"/>
    </source>
</evidence>
<gene>
    <name evidence="1" type="primary">murB</name>
    <name type="ordered locus">LMHCC_1148</name>
</gene>
<dbReference type="EC" id="1.3.1.98" evidence="1"/>
<dbReference type="EMBL" id="CP001175">
    <property type="protein sequence ID" value="ACK39496.1"/>
    <property type="molecule type" value="Genomic_DNA"/>
</dbReference>
<dbReference type="RefSeq" id="WP_012581328.1">
    <property type="nucleotide sequence ID" value="NC_011660.1"/>
</dbReference>
<dbReference type="SMR" id="B8DE89"/>
<dbReference type="KEGG" id="lmh:LMHCC_1148"/>
<dbReference type="HOGENOM" id="CLU_035304_1_1_9"/>
<dbReference type="UniPathway" id="UPA00219"/>
<dbReference type="GO" id="GO:0005829">
    <property type="term" value="C:cytosol"/>
    <property type="evidence" value="ECO:0007669"/>
    <property type="project" value="TreeGrafter"/>
</dbReference>
<dbReference type="GO" id="GO:0071949">
    <property type="term" value="F:FAD binding"/>
    <property type="evidence" value="ECO:0007669"/>
    <property type="project" value="InterPro"/>
</dbReference>
<dbReference type="GO" id="GO:0008762">
    <property type="term" value="F:UDP-N-acetylmuramate dehydrogenase activity"/>
    <property type="evidence" value="ECO:0007669"/>
    <property type="project" value="UniProtKB-UniRule"/>
</dbReference>
<dbReference type="GO" id="GO:0051301">
    <property type="term" value="P:cell division"/>
    <property type="evidence" value="ECO:0007669"/>
    <property type="project" value="UniProtKB-KW"/>
</dbReference>
<dbReference type="GO" id="GO:0071555">
    <property type="term" value="P:cell wall organization"/>
    <property type="evidence" value="ECO:0007669"/>
    <property type="project" value="UniProtKB-KW"/>
</dbReference>
<dbReference type="GO" id="GO:0009252">
    <property type="term" value="P:peptidoglycan biosynthetic process"/>
    <property type="evidence" value="ECO:0007669"/>
    <property type="project" value="UniProtKB-UniRule"/>
</dbReference>
<dbReference type="GO" id="GO:0008360">
    <property type="term" value="P:regulation of cell shape"/>
    <property type="evidence" value="ECO:0007669"/>
    <property type="project" value="UniProtKB-KW"/>
</dbReference>
<dbReference type="FunFam" id="3.90.78.10:FF:000001">
    <property type="entry name" value="UDP-N-acetylenolpyruvoylglucosamine reductase"/>
    <property type="match status" value="1"/>
</dbReference>
<dbReference type="Gene3D" id="3.30.465.10">
    <property type="match status" value="1"/>
</dbReference>
<dbReference type="Gene3D" id="3.90.78.10">
    <property type="entry name" value="UDP-N-acetylenolpyruvoylglucosamine reductase, C-terminal domain"/>
    <property type="match status" value="1"/>
</dbReference>
<dbReference type="Gene3D" id="3.30.43.10">
    <property type="entry name" value="Uridine Diphospho-n-acetylenolpyruvylglucosamine Reductase, domain 2"/>
    <property type="match status" value="1"/>
</dbReference>
<dbReference type="HAMAP" id="MF_00037">
    <property type="entry name" value="MurB"/>
    <property type="match status" value="1"/>
</dbReference>
<dbReference type="InterPro" id="IPR016166">
    <property type="entry name" value="FAD-bd_PCMH"/>
</dbReference>
<dbReference type="InterPro" id="IPR036318">
    <property type="entry name" value="FAD-bd_PCMH-like_sf"/>
</dbReference>
<dbReference type="InterPro" id="IPR016167">
    <property type="entry name" value="FAD-bd_PCMH_sub1"/>
</dbReference>
<dbReference type="InterPro" id="IPR016169">
    <property type="entry name" value="FAD-bd_PCMH_sub2"/>
</dbReference>
<dbReference type="InterPro" id="IPR003170">
    <property type="entry name" value="MurB"/>
</dbReference>
<dbReference type="InterPro" id="IPR011601">
    <property type="entry name" value="MurB_C"/>
</dbReference>
<dbReference type="InterPro" id="IPR036635">
    <property type="entry name" value="MurB_C_sf"/>
</dbReference>
<dbReference type="InterPro" id="IPR006094">
    <property type="entry name" value="Oxid_FAD_bind_N"/>
</dbReference>
<dbReference type="NCBIfam" id="TIGR00179">
    <property type="entry name" value="murB"/>
    <property type="match status" value="1"/>
</dbReference>
<dbReference type="NCBIfam" id="NF010480">
    <property type="entry name" value="PRK13905.1"/>
    <property type="match status" value="1"/>
</dbReference>
<dbReference type="PANTHER" id="PTHR21071">
    <property type="entry name" value="UDP-N-ACETYLENOLPYRUVOYLGLUCOSAMINE REDUCTASE"/>
    <property type="match status" value="1"/>
</dbReference>
<dbReference type="PANTHER" id="PTHR21071:SF4">
    <property type="entry name" value="UDP-N-ACETYLENOLPYRUVOYLGLUCOSAMINE REDUCTASE"/>
    <property type="match status" value="1"/>
</dbReference>
<dbReference type="Pfam" id="PF01565">
    <property type="entry name" value="FAD_binding_4"/>
    <property type="match status" value="1"/>
</dbReference>
<dbReference type="Pfam" id="PF02873">
    <property type="entry name" value="MurB_C"/>
    <property type="match status" value="1"/>
</dbReference>
<dbReference type="SUPFAM" id="SSF56176">
    <property type="entry name" value="FAD-binding/transporter-associated domain-like"/>
    <property type="match status" value="1"/>
</dbReference>
<dbReference type="SUPFAM" id="SSF56194">
    <property type="entry name" value="Uridine diphospho-N-Acetylenolpyruvylglucosamine reductase, MurB, C-terminal domain"/>
    <property type="match status" value="1"/>
</dbReference>
<dbReference type="PROSITE" id="PS51387">
    <property type="entry name" value="FAD_PCMH"/>
    <property type="match status" value="1"/>
</dbReference>
<proteinExistence type="inferred from homology"/>
<protein>
    <recommendedName>
        <fullName evidence="1">UDP-N-acetylenolpyruvoylglucosamine reductase</fullName>
        <ecNumber evidence="1">1.3.1.98</ecNumber>
    </recommendedName>
    <alternativeName>
        <fullName evidence="1">UDP-N-acetylmuramate dehydrogenase</fullName>
    </alternativeName>
</protein>
<keyword id="KW-0131">Cell cycle</keyword>
<keyword id="KW-0132">Cell division</keyword>
<keyword id="KW-0133">Cell shape</keyword>
<keyword id="KW-0961">Cell wall biogenesis/degradation</keyword>
<keyword id="KW-0963">Cytoplasm</keyword>
<keyword id="KW-0274">FAD</keyword>
<keyword id="KW-0285">Flavoprotein</keyword>
<keyword id="KW-0521">NADP</keyword>
<keyword id="KW-0560">Oxidoreductase</keyword>
<keyword id="KW-0573">Peptidoglycan synthesis</keyword>